<protein>
    <recommendedName>
        <fullName evidence="1">PF03932 family protein CutC</fullName>
    </recommendedName>
</protein>
<proteinExistence type="inferred from homology"/>
<comment type="subcellular location">
    <subcellularLocation>
        <location evidence="1">Cytoplasm</location>
    </subcellularLocation>
</comment>
<comment type="similarity">
    <text evidence="1">Belongs to the CutC family.</text>
</comment>
<comment type="caution">
    <text evidence="1">Once thought to be involved in copper homeostasis, experiments in E.coli have shown this is not the case.</text>
</comment>
<evidence type="ECO:0000255" key="1">
    <source>
        <dbReference type="HAMAP-Rule" id="MF_00795"/>
    </source>
</evidence>
<feature type="chain" id="PRO_1000148517" description="PF03932 family protein CutC">
    <location>
        <begin position="1"/>
        <end position="243"/>
    </location>
</feature>
<reference key="1">
    <citation type="journal article" date="2009" name="J. Bacteriol.">
        <title>Complete genome sequence of Haemophilus parasuis SH0165.</title>
        <authorList>
            <person name="Yue M."/>
            <person name="Yang F."/>
            <person name="Yang J."/>
            <person name="Bei W."/>
            <person name="Cai X."/>
            <person name="Chen L."/>
            <person name="Dong J."/>
            <person name="Zhou R."/>
            <person name="Jin M."/>
            <person name="Jin Q."/>
            <person name="Chen H."/>
        </authorList>
    </citation>
    <scope>NUCLEOTIDE SEQUENCE [LARGE SCALE GENOMIC DNA]</scope>
    <source>
        <strain>SH0165</strain>
    </source>
</reference>
<organism>
    <name type="scientific">Glaesserella parasuis serovar 5 (strain SH0165)</name>
    <name type="common">Haemophilus parasuis</name>
    <dbReference type="NCBI Taxonomy" id="557723"/>
    <lineage>
        <taxon>Bacteria</taxon>
        <taxon>Pseudomonadati</taxon>
        <taxon>Pseudomonadota</taxon>
        <taxon>Gammaproteobacteria</taxon>
        <taxon>Pasteurellales</taxon>
        <taxon>Pasteurellaceae</taxon>
        <taxon>Glaesserella</taxon>
    </lineage>
</organism>
<sequence length="243" mass="26238">MKVEICVDNLESVITANQFPIDRIELCSALAVGGLTPNLGFIQQAQQISTIPLALMIRPRAGDFLYSEDEIQIMLNDIATAKQLGIQAVVFGALSANGEIDLATTELLVKASQGMEITFHRAFDLCKDPITALEQLIDLGCHRILTSGQAATAFDGIPVIQQLVKQANGRIQVMAGCGVNADNVKQIIEQTKVPEIHFSAKGQRQSLMDSISSARMGTSSQDNVLDIADSQKIKGILKYISLL</sequence>
<gene>
    <name evidence="1" type="primary">cutC</name>
    <name type="ordered locus">HAPS_1689</name>
</gene>
<name>CUTC_GLAP5</name>
<accession>B8F7C5</accession>
<dbReference type="EMBL" id="CP001321">
    <property type="protein sequence ID" value="ACL33227.1"/>
    <property type="molecule type" value="Genomic_DNA"/>
</dbReference>
<dbReference type="RefSeq" id="WP_015939883.1">
    <property type="nucleotide sequence ID" value="NC_011852.1"/>
</dbReference>
<dbReference type="SMR" id="B8F7C5"/>
<dbReference type="STRING" id="557723.HAPS_1689"/>
<dbReference type="KEGG" id="hap:HAPS_1689"/>
<dbReference type="PATRIC" id="fig|557723.8.peg.1664"/>
<dbReference type="HOGENOM" id="CLU_050555_3_1_6"/>
<dbReference type="Proteomes" id="UP000006743">
    <property type="component" value="Chromosome"/>
</dbReference>
<dbReference type="GO" id="GO:0005737">
    <property type="term" value="C:cytoplasm"/>
    <property type="evidence" value="ECO:0007669"/>
    <property type="project" value="UniProtKB-SubCell"/>
</dbReference>
<dbReference type="GO" id="GO:0005507">
    <property type="term" value="F:copper ion binding"/>
    <property type="evidence" value="ECO:0007669"/>
    <property type="project" value="TreeGrafter"/>
</dbReference>
<dbReference type="FunFam" id="3.20.20.380:FF:000001">
    <property type="entry name" value="Copper homeostasis protein CutC"/>
    <property type="match status" value="1"/>
</dbReference>
<dbReference type="Gene3D" id="3.20.20.380">
    <property type="entry name" value="Copper homeostasis (CutC) domain"/>
    <property type="match status" value="1"/>
</dbReference>
<dbReference type="HAMAP" id="MF_00795">
    <property type="entry name" value="CutC"/>
    <property type="match status" value="1"/>
</dbReference>
<dbReference type="InterPro" id="IPR005627">
    <property type="entry name" value="CutC-like"/>
</dbReference>
<dbReference type="InterPro" id="IPR036822">
    <property type="entry name" value="CutC-like_dom_sf"/>
</dbReference>
<dbReference type="PANTHER" id="PTHR12598">
    <property type="entry name" value="COPPER HOMEOSTASIS PROTEIN CUTC"/>
    <property type="match status" value="1"/>
</dbReference>
<dbReference type="PANTHER" id="PTHR12598:SF0">
    <property type="entry name" value="COPPER HOMEOSTASIS PROTEIN CUTC HOMOLOG"/>
    <property type="match status" value="1"/>
</dbReference>
<dbReference type="Pfam" id="PF03932">
    <property type="entry name" value="CutC"/>
    <property type="match status" value="1"/>
</dbReference>
<dbReference type="SUPFAM" id="SSF110395">
    <property type="entry name" value="CutC-like"/>
    <property type="match status" value="1"/>
</dbReference>
<keyword id="KW-0963">Cytoplasm</keyword>
<keyword id="KW-1185">Reference proteome</keyword>